<evidence type="ECO:0000305" key="1"/>
<name>INS_LAMFL</name>
<sequence>SALTGAGGTHLCGSHLVEALYVVCGDRGFFYTPSKTGIVEQCCHRKCSIYDMENYCN</sequence>
<proteinExistence type="evidence at protein level"/>
<dbReference type="SMR" id="P68988"/>
<dbReference type="GO" id="GO:0005615">
    <property type="term" value="C:extracellular space"/>
    <property type="evidence" value="ECO:0007669"/>
    <property type="project" value="TreeGrafter"/>
</dbReference>
<dbReference type="GO" id="GO:0005179">
    <property type="term" value="F:hormone activity"/>
    <property type="evidence" value="ECO:0007669"/>
    <property type="project" value="UniProtKB-KW"/>
</dbReference>
<dbReference type="GO" id="GO:0006006">
    <property type="term" value="P:glucose metabolic process"/>
    <property type="evidence" value="ECO:0007669"/>
    <property type="project" value="UniProtKB-KW"/>
</dbReference>
<dbReference type="CDD" id="cd04367">
    <property type="entry name" value="IlGF_insulin_like"/>
    <property type="match status" value="1"/>
</dbReference>
<dbReference type="Gene3D" id="1.10.100.10">
    <property type="entry name" value="Insulin-like"/>
    <property type="match status" value="1"/>
</dbReference>
<dbReference type="InterPro" id="IPR004825">
    <property type="entry name" value="Insulin"/>
</dbReference>
<dbReference type="InterPro" id="IPR016179">
    <property type="entry name" value="Insulin-like"/>
</dbReference>
<dbReference type="InterPro" id="IPR036438">
    <property type="entry name" value="Insulin-like_sf"/>
</dbReference>
<dbReference type="InterPro" id="IPR022353">
    <property type="entry name" value="Insulin_CS"/>
</dbReference>
<dbReference type="InterPro" id="IPR022352">
    <property type="entry name" value="Insulin_family"/>
</dbReference>
<dbReference type="PANTHER" id="PTHR11454:SF9">
    <property type="entry name" value="INSULIN"/>
    <property type="match status" value="1"/>
</dbReference>
<dbReference type="PANTHER" id="PTHR11454">
    <property type="entry name" value="INSULIN/INSULIN GROWTH FACTOR"/>
    <property type="match status" value="1"/>
</dbReference>
<dbReference type="Pfam" id="PF00049">
    <property type="entry name" value="Insulin"/>
    <property type="match status" value="2"/>
</dbReference>
<dbReference type="PRINTS" id="PR00277">
    <property type="entry name" value="INSULIN"/>
</dbReference>
<dbReference type="PRINTS" id="PR00276">
    <property type="entry name" value="INSULINFAMLY"/>
</dbReference>
<dbReference type="SMART" id="SM00078">
    <property type="entry name" value="IlGF"/>
    <property type="match status" value="1"/>
</dbReference>
<dbReference type="SUPFAM" id="SSF56994">
    <property type="entry name" value="Insulin-like"/>
    <property type="match status" value="1"/>
</dbReference>
<dbReference type="PROSITE" id="PS00262">
    <property type="entry name" value="INSULIN"/>
    <property type="match status" value="1"/>
</dbReference>
<organism>
    <name type="scientific">Lampetra fluviatilis</name>
    <name type="common">European river lamprey</name>
    <name type="synonym">Petromyzon fluviatilis</name>
    <dbReference type="NCBI Taxonomy" id="7748"/>
    <lineage>
        <taxon>Eukaryota</taxon>
        <taxon>Metazoa</taxon>
        <taxon>Chordata</taxon>
        <taxon>Craniata</taxon>
        <taxon>Vertebrata</taxon>
        <taxon>Cyclostomata</taxon>
        <taxon>Hyperoartia</taxon>
        <taxon>Petromyzontiformes</taxon>
        <taxon>Petromyzontidae</taxon>
        <taxon>Lampetra</taxon>
    </lineage>
</organism>
<keyword id="KW-0119">Carbohydrate metabolism</keyword>
<keyword id="KW-0903">Direct protein sequencing</keyword>
<keyword id="KW-1015">Disulfide bond</keyword>
<keyword id="KW-0313">Glucose metabolism</keyword>
<keyword id="KW-0372">Hormone</keyword>
<keyword id="KW-0964">Secreted</keyword>
<feature type="peptide" id="PRO_0000015828" description="Insulin B chain">
    <location>
        <begin position="1"/>
        <end position="36"/>
    </location>
</feature>
<feature type="peptide" id="PRO_0000015829" description="Insulin A chain">
    <location>
        <begin position="37"/>
        <end position="57"/>
    </location>
</feature>
<feature type="disulfide bond" description="Interchain (between B and A chains)">
    <location>
        <begin position="12"/>
        <end position="43"/>
    </location>
</feature>
<feature type="disulfide bond" description="Interchain (between B and A chains)">
    <location>
        <begin position="24"/>
        <end position="56"/>
    </location>
</feature>
<feature type="disulfide bond">
    <location>
        <begin position="42"/>
        <end position="47"/>
    </location>
</feature>
<feature type="non-consecutive residues" evidence="1">
    <location>
        <begin position="36"/>
        <end position="37"/>
    </location>
</feature>
<gene>
    <name type="primary">ins</name>
</gene>
<reference key="1">
    <citation type="journal article" date="1995" name="Gen. Comp. Endocrinol.">
        <title>Characterization of insulin, glucagon, and somatostatin from the river lamprey, Lampetra fluviatilis.</title>
        <authorList>
            <person name="Conlon J.M."/>
            <person name="Bondareva V."/>
            <person name="Rusakov Y."/>
            <person name="Plisetskaya E.M."/>
            <person name="Mynarcik D.C."/>
            <person name="Whittaker J."/>
        </authorList>
    </citation>
    <scope>PROTEIN SEQUENCE</scope>
    <source>
        <tissue>Pancreas</tissue>
    </source>
</reference>
<comment type="function">
    <text>Insulin decreases blood glucose concentration. It increases cell permeability to monosaccharides, amino acids and fatty acids. It accelerates glycolysis, the pentose phosphate cycle, and glycogen synthesis in liver.</text>
</comment>
<comment type="subunit">
    <text>Heterodimer of a B chain and an A chain linked by two disulfide bonds.</text>
</comment>
<comment type="subcellular location">
    <subcellularLocation>
        <location>Secreted</location>
    </subcellularLocation>
</comment>
<comment type="similarity">
    <text evidence="1">Belongs to the insulin family.</text>
</comment>
<accession>P68988</accession>
<accession>P14806</accession>
<accession>Q9PRR1</accession>
<accession>Q9PRR2</accession>
<protein>
    <recommendedName>
        <fullName>Insulin</fullName>
    </recommendedName>
    <component>
        <recommendedName>
            <fullName>Insulin B chain</fullName>
        </recommendedName>
    </component>
    <component>
        <recommendedName>
            <fullName>Insulin A chain</fullName>
        </recommendedName>
    </component>
</protein>